<dbReference type="EMBL" id="CP000606">
    <property type="protein sequence ID" value="ABO22035.1"/>
    <property type="molecule type" value="Genomic_DNA"/>
</dbReference>
<dbReference type="RefSeq" id="WP_011863971.1">
    <property type="nucleotide sequence ID" value="NC_009092.1"/>
</dbReference>
<dbReference type="SMR" id="A3Q987"/>
<dbReference type="STRING" id="323850.Shew_0163"/>
<dbReference type="KEGG" id="slo:Shew_0163"/>
<dbReference type="eggNOG" id="COG0091">
    <property type="taxonomic scope" value="Bacteria"/>
</dbReference>
<dbReference type="HOGENOM" id="CLU_083987_3_3_6"/>
<dbReference type="OrthoDB" id="9805969at2"/>
<dbReference type="Proteomes" id="UP000001558">
    <property type="component" value="Chromosome"/>
</dbReference>
<dbReference type="GO" id="GO:0022625">
    <property type="term" value="C:cytosolic large ribosomal subunit"/>
    <property type="evidence" value="ECO:0007669"/>
    <property type="project" value="TreeGrafter"/>
</dbReference>
<dbReference type="GO" id="GO:0019843">
    <property type="term" value="F:rRNA binding"/>
    <property type="evidence" value="ECO:0007669"/>
    <property type="project" value="UniProtKB-UniRule"/>
</dbReference>
<dbReference type="GO" id="GO:0003735">
    <property type="term" value="F:structural constituent of ribosome"/>
    <property type="evidence" value="ECO:0007669"/>
    <property type="project" value="InterPro"/>
</dbReference>
<dbReference type="GO" id="GO:0006412">
    <property type="term" value="P:translation"/>
    <property type="evidence" value="ECO:0007669"/>
    <property type="project" value="UniProtKB-UniRule"/>
</dbReference>
<dbReference type="CDD" id="cd00336">
    <property type="entry name" value="Ribosomal_L22"/>
    <property type="match status" value="1"/>
</dbReference>
<dbReference type="FunFam" id="3.90.470.10:FF:000001">
    <property type="entry name" value="50S ribosomal protein L22"/>
    <property type="match status" value="1"/>
</dbReference>
<dbReference type="Gene3D" id="3.90.470.10">
    <property type="entry name" value="Ribosomal protein L22/L17"/>
    <property type="match status" value="1"/>
</dbReference>
<dbReference type="HAMAP" id="MF_01331_B">
    <property type="entry name" value="Ribosomal_uL22_B"/>
    <property type="match status" value="1"/>
</dbReference>
<dbReference type="InterPro" id="IPR001063">
    <property type="entry name" value="Ribosomal_uL22"/>
</dbReference>
<dbReference type="InterPro" id="IPR005727">
    <property type="entry name" value="Ribosomal_uL22_bac/chlpt-type"/>
</dbReference>
<dbReference type="InterPro" id="IPR047867">
    <property type="entry name" value="Ribosomal_uL22_bac/org-type"/>
</dbReference>
<dbReference type="InterPro" id="IPR018260">
    <property type="entry name" value="Ribosomal_uL22_CS"/>
</dbReference>
<dbReference type="InterPro" id="IPR036394">
    <property type="entry name" value="Ribosomal_uL22_sf"/>
</dbReference>
<dbReference type="NCBIfam" id="TIGR01044">
    <property type="entry name" value="rplV_bact"/>
    <property type="match status" value="1"/>
</dbReference>
<dbReference type="PANTHER" id="PTHR13501">
    <property type="entry name" value="CHLOROPLAST 50S RIBOSOMAL PROTEIN L22-RELATED"/>
    <property type="match status" value="1"/>
</dbReference>
<dbReference type="PANTHER" id="PTHR13501:SF8">
    <property type="entry name" value="LARGE RIBOSOMAL SUBUNIT PROTEIN UL22M"/>
    <property type="match status" value="1"/>
</dbReference>
<dbReference type="Pfam" id="PF00237">
    <property type="entry name" value="Ribosomal_L22"/>
    <property type="match status" value="1"/>
</dbReference>
<dbReference type="SUPFAM" id="SSF54843">
    <property type="entry name" value="Ribosomal protein L22"/>
    <property type="match status" value="1"/>
</dbReference>
<dbReference type="PROSITE" id="PS00464">
    <property type="entry name" value="RIBOSOMAL_L22"/>
    <property type="match status" value="1"/>
</dbReference>
<proteinExistence type="inferred from homology"/>
<protein>
    <recommendedName>
        <fullName evidence="1">Large ribosomal subunit protein uL22</fullName>
    </recommendedName>
    <alternativeName>
        <fullName evidence="2">50S ribosomal protein L22</fullName>
    </alternativeName>
</protein>
<keyword id="KW-1185">Reference proteome</keyword>
<keyword id="KW-0687">Ribonucleoprotein</keyword>
<keyword id="KW-0689">Ribosomal protein</keyword>
<keyword id="KW-0694">RNA-binding</keyword>
<keyword id="KW-0699">rRNA-binding</keyword>
<name>RL22_SHELP</name>
<reference key="1">
    <citation type="submission" date="2007-03" db="EMBL/GenBank/DDBJ databases">
        <title>Complete sequence of Shewanella loihica PV-4.</title>
        <authorList>
            <consortium name="US DOE Joint Genome Institute"/>
            <person name="Copeland A."/>
            <person name="Lucas S."/>
            <person name="Lapidus A."/>
            <person name="Barry K."/>
            <person name="Detter J.C."/>
            <person name="Glavina del Rio T."/>
            <person name="Hammon N."/>
            <person name="Israni S."/>
            <person name="Dalin E."/>
            <person name="Tice H."/>
            <person name="Pitluck S."/>
            <person name="Chain P."/>
            <person name="Malfatti S."/>
            <person name="Shin M."/>
            <person name="Vergez L."/>
            <person name="Schmutz J."/>
            <person name="Larimer F."/>
            <person name="Land M."/>
            <person name="Hauser L."/>
            <person name="Kyrpides N."/>
            <person name="Mikhailova N."/>
            <person name="Romine M.F."/>
            <person name="Serres G."/>
            <person name="Fredrickson J."/>
            <person name="Tiedje J."/>
            <person name="Richardson P."/>
        </authorList>
    </citation>
    <scope>NUCLEOTIDE SEQUENCE [LARGE SCALE GENOMIC DNA]</scope>
    <source>
        <strain>ATCC BAA-1088 / PV-4</strain>
    </source>
</reference>
<accession>A3Q987</accession>
<organism>
    <name type="scientific">Shewanella loihica (strain ATCC BAA-1088 / PV-4)</name>
    <dbReference type="NCBI Taxonomy" id="323850"/>
    <lineage>
        <taxon>Bacteria</taxon>
        <taxon>Pseudomonadati</taxon>
        <taxon>Pseudomonadota</taxon>
        <taxon>Gammaproteobacteria</taxon>
        <taxon>Alteromonadales</taxon>
        <taxon>Shewanellaceae</taxon>
        <taxon>Shewanella</taxon>
    </lineage>
</organism>
<gene>
    <name evidence="1" type="primary">rplV</name>
    <name type="ordered locus">Shew_0163</name>
</gene>
<feature type="chain" id="PRO_1000052647" description="Large ribosomal subunit protein uL22">
    <location>
        <begin position="1"/>
        <end position="110"/>
    </location>
</feature>
<evidence type="ECO:0000255" key="1">
    <source>
        <dbReference type="HAMAP-Rule" id="MF_01331"/>
    </source>
</evidence>
<evidence type="ECO:0000305" key="2"/>
<comment type="function">
    <text evidence="1">This protein binds specifically to 23S rRNA; its binding is stimulated by other ribosomal proteins, e.g. L4, L17, and L20. It is important during the early stages of 50S assembly. It makes multiple contacts with different domains of the 23S rRNA in the assembled 50S subunit and ribosome (By similarity).</text>
</comment>
<comment type="function">
    <text evidence="1">The globular domain of the protein is located near the polypeptide exit tunnel on the outside of the subunit, while an extended beta-hairpin is found that lines the wall of the exit tunnel in the center of the 70S ribosome.</text>
</comment>
<comment type="subunit">
    <text evidence="1">Part of the 50S ribosomal subunit.</text>
</comment>
<comment type="similarity">
    <text evidence="1">Belongs to the universal ribosomal protein uL22 family.</text>
</comment>
<sequence>MEVLAKHRFARTSPQKCRLVADQIRGLPVAKALEILTFSPKKAAVLVKKVLDSAIANAEHNEGADIDELKVGKVFVDEGPTMKRIMPRAKGRADRIIKRTSHITVVVSDR</sequence>